<keyword id="KW-0378">Hydrolase</keyword>
<keyword id="KW-0460">Magnesium</keyword>
<keyword id="KW-0464">Manganese</keyword>
<keyword id="KW-0479">Metal-binding</keyword>
<keyword id="KW-1185">Reference proteome</keyword>
<reference key="1">
    <citation type="journal article" date="1998" name="Microbiology">
        <title>A 35.7 kb DNA fragment from the Bacillus subtilis chromosome containing a putative 12.3 kb operon involved in hexuronate catabolism and a perfectly symmetrical hypothetical catabolite-responsive element.</title>
        <authorList>
            <person name="Rivolta C."/>
            <person name="Soldo B."/>
            <person name="Lazarevic V."/>
            <person name="Joris B."/>
            <person name="Mauel C."/>
            <person name="Karamata D."/>
        </authorList>
    </citation>
    <scope>NUCLEOTIDE SEQUENCE [GENOMIC DNA]</scope>
    <source>
        <strain>168</strain>
    </source>
</reference>
<reference key="2">
    <citation type="journal article" date="1997" name="Nature">
        <title>The complete genome sequence of the Gram-positive bacterium Bacillus subtilis.</title>
        <authorList>
            <person name="Kunst F."/>
            <person name="Ogasawara N."/>
            <person name="Moszer I."/>
            <person name="Albertini A.M."/>
            <person name="Alloni G."/>
            <person name="Azevedo V."/>
            <person name="Bertero M.G."/>
            <person name="Bessieres P."/>
            <person name="Bolotin A."/>
            <person name="Borchert S."/>
            <person name="Borriss R."/>
            <person name="Boursier L."/>
            <person name="Brans A."/>
            <person name="Braun M."/>
            <person name="Brignell S.C."/>
            <person name="Bron S."/>
            <person name="Brouillet S."/>
            <person name="Bruschi C.V."/>
            <person name="Caldwell B."/>
            <person name="Capuano V."/>
            <person name="Carter N.M."/>
            <person name="Choi S.-K."/>
            <person name="Codani J.-J."/>
            <person name="Connerton I.F."/>
            <person name="Cummings N.J."/>
            <person name="Daniel R.A."/>
            <person name="Denizot F."/>
            <person name="Devine K.M."/>
            <person name="Duesterhoeft A."/>
            <person name="Ehrlich S.D."/>
            <person name="Emmerson P.T."/>
            <person name="Entian K.-D."/>
            <person name="Errington J."/>
            <person name="Fabret C."/>
            <person name="Ferrari E."/>
            <person name="Foulger D."/>
            <person name="Fritz C."/>
            <person name="Fujita M."/>
            <person name="Fujita Y."/>
            <person name="Fuma S."/>
            <person name="Galizzi A."/>
            <person name="Galleron N."/>
            <person name="Ghim S.-Y."/>
            <person name="Glaser P."/>
            <person name="Goffeau A."/>
            <person name="Golightly E.J."/>
            <person name="Grandi G."/>
            <person name="Guiseppi G."/>
            <person name="Guy B.J."/>
            <person name="Haga K."/>
            <person name="Haiech J."/>
            <person name="Harwood C.R."/>
            <person name="Henaut A."/>
            <person name="Hilbert H."/>
            <person name="Holsappel S."/>
            <person name="Hosono S."/>
            <person name="Hullo M.-F."/>
            <person name="Itaya M."/>
            <person name="Jones L.-M."/>
            <person name="Joris B."/>
            <person name="Karamata D."/>
            <person name="Kasahara Y."/>
            <person name="Klaerr-Blanchard M."/>
            <person name="Klein C."/>
            <person name="Kobayashi Y."/>
            <person name="Koetter P."/>
            <person name="Koningstein G."/>
            <person name="Krogh S."/>
            <person name="Kumano M."/>
            <person name="Kurita K."/>
            <person name="Lapidus A."/>
            <person name="Lardinois S."/>
            <person name="Lauber J."/>
            <person name="Lazarevic V."/>
            <person name="Lee S.-M."/>
            <person name="Levine A."/>
            <person name="Liu H."/>
            <person name="Masuda S."/>
            <person name="Mauel C."/>
            <person name="Medigue C."/>
            <person name="Medina N."/>
            <person name="Mellado R.P."/>
            <person name="Mizuno M."/>
            <person name="Moestl D."/>
            <person name="Nakai S."/>
            <person name="Noback M."/>
            <person name="Noone D."/>
            <person name="O'Reilly M."/>
            <person name="Ogawa K."/>
            <person name="Ogiwara A."/>
            <person name="Oudega B."/>
            <person name="Park S.-H."/>
            <person name="Parro V."/>
            <person name="Pohl T.M."/>
            <person name="Portetelle D."/>
            <person name="Porwollik S."/>
            <person name="Prescott A.M."/>
            <person name="Presecan E."/>
            <person name="Pujic P."/>
            <person name="Purnelle B."/>
            <person name="Rapoport G."/>
            <person name="Rey M."/>
            <person name="Reynolds S."/>
            <person name="Rieger M."/>
            <person name="Rivolta C."/>
            <person name="Rocha E."/>
            <person name="Roche B."/>
            <person name="Rose M."/>
            <person name="Sadaie Y."/>
            <person name="Sato T."/>
            <person name="Scanlan E."/>
            <person name="Schleich S."/>
            <person name="Schroeter R."/>
            <person name="Scoffone F."/>
            <person name="Sekiguchi J."/>
            <person name="Sekowska A."/>
            <person name="Seror S.J."/>
            <person name="Serror P."/>
            <person name="Shin B.-S."/>
            <person name="Soldo B."/>
            <person name="Sorokin A."/>
            <person name="Tacconi E."/>
            <person name="Takagi T."/>
            <person name="Takahashi H."/>
            <person name="Takemaru K."/>
            <person name="Takeuchi M."/>
            <person name="Tamakoshi A."/>
            <person name="Tanaka T."/>
            <person name="Terpstra P."/>
            <person name="Tognoni A."/>
            <person name="Tosato V."/>
            <person name="Uchiyama S."/>
            <person name="Vandenbol M."/>
            <person name="Vannier F."/>
            <person name="Vassarotti A."/>
            <person name="Viari A."/>
            <person name="Wambutt R."/>
            <person name="Wedler E."/>
            <person name="Wedler H."/>
            <person name="Weitzenegger T."/>
            <person name="Winters P."/>
            <person name="Wipat A."/>
            <person name="Yamamoto H."/>
            <person name="Yamane K."/>
            <person name="Yasumoto K."/>
            <person name="Yata K."/>
            <person name="Yoshida K."/>
            <person name="Yoshikawa H.-F."/>
            <person name="Zumstein E."/>
            <person name="Yoshikawa H."/>
            <person name="Danchin A."/>
        </authorList>
    </citation>
    <scope>NUCLEOTIDE SEQUENCE [LARGE SCALE GENOMIC DNA]</scope>
    <source>
        <strain>168</strain>
    </source>
</reference>
<reference key="3">
    <citation type="journal article" date="2009" name="Microbiology">
        <title>From a consortium sequence to a unified sequence: the Bacillus subtilis 168 reference genome a decade later.</title>
        <authorList>
            <person name="Barbe V."/>
            <person name="Cruveiller S."/>
            <person name="Kunst F."/>
            <person name="Lenoble P."/>
            <person name="Meurice G."/>
            <person name="Sekowska A."/>
            <person name="Vallenet D."/>
            <person name="Wang T."/>
            <person name="Moszer I."/>
            <person name="Medigue C."/>
            <person name="Danchin A."/>
        </authorList>
    </citation>
    <scope>SEQUENCE REVISION TO N-TERMINUS</scope>
</reference>
<reference key="4">
    <citation type="journal article" date="2000" name="J. Gen. Appl. Microbiol.">
        <title>Genetic analysis of Bacillus subtilis mutator genes.</title>
        <authorList>
            <person name="Sasaki M."/>
            <person name="Yonemura Y."/>
            <person name="Kurusu Y."/>
        </authorList>
    </citation>
    <scope>DISRUPTION PHENOTYPE</scope>
    <source>
        <strain>168</strain>
    </source>
</reference>
<protein>
    <recommendedName>
        <fullName>Putative ADP-ribose pyrophosphatase YjhB</fullName>
        <ecNumber>3.6.1.-</ecNumber>
    </recommendedName>
</protein>
<accession>C0SPC3</accession>
<accession>O34488</accession>
<accession>Q796N8</accession>
<comment type="function">
    <text evidence="1">Probably mediates the hydrolysis of some nucleoside diphosphate derivatives.</text>
</comment>
<comment type="cofactor">
    <cofactor evidence="1">
        <name>Mg(2+)</name>
        <dbReference type="ChEBI" id="CHEBI:18420"/>
    </cofactor>
    <cofactor evidence="1">
        <name>Mn(2+)</name>
        <dbReference type="ChEBI" id="CHEBI:29035"/>
    </cofactor>
</comment>
<comment type="disruption phenotype">
    <text evidence="3">Cells lacking this gene have an unchanged spontaneous mutation frequency, even in triple mutT/yjhB/yvcI disruptions.</text>
</comment>
<comment type="similarity">
    <text evidence="4">Belongs to the Nudix hydrolase family.</text>
</comment>
<comment type="sequence caution" evidence="4">
    <conflict type="erroneous initiation">
        <sequence resource="EMBL-CDS" id="AAC46315"/>
    </conflict>
</comment>
<dbReference type="EC" id="3.6.1.-"/>
<dbReference type="EMBL" id="AF015825">
    <property type="protein sequence ID" value="AAC46315.1"/>
    <property type="status" value="ALT_INIT"/>
    <property type="molecule type" value="Genomic_DNA"/>
</dbReference>
<dbReference type="EMBL" id="AL009126">
    <property type="protein sequence ID" value="CAB13076.2"/>
    <property type="molecule type" value="Genomic_DNA"/>
</dbReference>
<dbReference type="PIR" id="H69850">
    <property type="entry name" value="H69850"/>
</dbReference>
<dbReference type="RefSeq" id="NP_389101.2">
    <property type="nucleotide sequence ID" value="NC_000964.3"/>
</dbReference>
<dbReference type="RefSeq" id="WP_010886490.1">
    <property type="nucleotide sequence ID" value="NZ_OZ025638.1"/>
</dbReference>
<dbReference type="SMR" id="C0SPC3"/>
<dbReference type="FunCoup" id="C0SPC3">
    <property type="interactions" value="17"/>
</dbReference>
<dbReference type="STRING" id="224308.BSU12190"/>
<dbReference type="PaxDb" id="224308-BSU12190"/>
<dbReference type="EnsemblBacteria" id="CAB13076">
    <property type="protein sequence ID" value="CAB13076"/>
    <property type="gene ID" value="BSU_12190"/>
</dbReference>
<dbReference type="GeneID" id="939419"/>
<dbReference type="KEGG" id="bsu:BSU12190"/>
<dbReference type="PATRIC" id="fig|224308.43.peg.1278"/>
<dbReference type="eggNOG" id="COG1051">
    <property type="taxonomic scope" value="Bacteria"/>
</dbReference>
<dbReference type="InParanoid" id="C0SPC3"/>
<dbReference type="OrthoDB" id="9804442at2"/>
<dbReference type="PhylomeDB" id="C0SPC3"/>
<dbReference type="BioCyc" id="BSUB:BSU12190-MONOMER"/>
<dbReference type="Proteomes" id="UP000001570">
    <property type="component" value="Chromosome"/>
</dbReference>
<dbReference type="GO" id="GO:0016787">
    <property type="term" value="F:hydrolase activity"/>
    <property type="evidence" value="ECO:0007669"/>
    <property type="project" value="UniProtKB-KW"/>
</dbReference>
<dbReference type="GO" id="GO:0046872">
    <property type="term" value="F:metal ion binding"/>
    <property type="evidence" value="ECO:0007669"/>
    <property type="project" value="UniProtKB-KW"/>
</dbReference>
<dbReference type="CDD" id="cd04672">
    <property type="entry name" value="NUDIX_CDP-Chase_like"/>
    <property type="match status" value="1"/>
</dbReference>
<dbReference type="Gene3D" id="6.10.250.1120">
    <property type="match status" value="1"/>
</dbReference>
<dbReference type="Gene3D" id="3.90.79.10">
    <property type="entry name" value="Nucleoside Triphosphate Pyrophosphohydrolase"/>
    <property type="match status" value="1"/>
</dbReference>
<dbReference type="InterPro" id="IPR015797">
    <property type="entry name" value="NUDIX_hydrolase-like_dom_sf"/>
</dbReference>
<dbReference type="InterPro" id="IPR000086">
    <property type="entry name" value="NUDIX_hydrolase_dom"/>
</dbReference>
<dbReference type="PANTHER" id="PTHR43046:SF16">
    <property type="entry name" value="ADP-RIBOSE PYROPHOSPHATASE YJHB-RELATED"/>
    <property type="match status" value="1"/>
</dbReference>
<dbReference type="PANTHER" id="PTHR43046">
    <property type="entry name" value="GDP-MANNOSE MANNOSYL HYDROLASE"/>
    <property type="match status" value="1"/>
</dbReference>
<dbReference type="Pfam" id="PF00293">
    <property type="entry name" value="NUDIX"/>
    <property type="match status" value="1"/>
</dbReference>
<dbReference type="Pfam" id="PF12535">
    <property type="entry name" value="Nudix_N"/>
    <property type="match status" value="1"/>
</dbReference>
<dbReference type="SUPFAM" id="SSF55811">
    <property type="entry name" value="Nudix"/>
    <property type="match status" value="1"/>
</dbReference>
<dbReference type="PROSITE" id="PS51462">
    <property type="entry name" value="NUDIX"/>
    <property type="match status" value="1"/>
</dbReference>
<gene>
    <name type="primary">yjhB</name>
    <name type="ordered locus">BSU12190</name>
</gene>
<proteinExistence type="inferred from homology"/>
<evidence type="ECO:0000250" key="1"/>
<evidence type="ECO:0000255" key="2">
    <source>
        <dbReference type="PROSITE-ProRule" id="PRU00794"/>
    </source>
</evidence>
<evidence type="ECO:0000269" key="3">
    <source>
    </source>
</evidence>
<evidence type="ECO:0000305" key="4"/>
<organism>
    <name type="scientific">Bacillus subtilis (strain 168)</name>
    <dbReference type="NCBI Taxonomy" id="224308"/>
    <lineage>
        <taxon>Bacteria</taxon>
        <taxon>Bacillati</taxon>
        <taxon>Bacillota</taxon>
        <taxon>Bacilli</taxon>
        <taxon>Bacillales</taxon>
        <taxon>Bacillaceae</taxon>
        <taxon>Bacillus</taxon>
    </lineage>
</organism>
<sequence length="208" mass="23943">MIKVQTKWLERAQRIRAIAQAGLAFSKDVYDRERYEELMKLSAEMMADYSEKDIEVITDLWQGEKGYPTPKADVRGAVFRENQILLVREKHDELWSLPGGFCEIGLSPAENVVKEIKEESGYDTEPSRLLAVLDSHKHSHPPQPYHYYKIFIACSMTDGQGETGIETNHAAFFPEDRLPPLSPKRNTPSQLSMLFDFLRHPDKKTIFD</sequence>
<name>YJHB_BACSU</name>
<feature type="chain" id="PRO_0000379973" description="Putative ADP-ribose pyrophosphatase YjhB">
    <location>
        <begin position="1"/>
        <end position="208"/>
    </location>
</feature>
<feature type="domain" description="Nudix hydrolase" evidence="2">
    <location>
        <begin position="69"/>
        <end position="195"/>
    </location>
</feature>
<feature type="short sequence motif" description="Nudix box">
    <location>
        <begin position="100"/>
        <end position="121"/>
    </location>
</feature>
<feature type="binding site" evidence="1">
    <location>
        <position position="115"/>
    </location>
    <ligand>
        <name>Mg(2+)</name>
        <dbReference type="ChEBI" id="CHEBI:18420"/>
    </ligand>
</feature>
<feature type="binding site" evidence="1">
    <location>
        <position position="119"/>
    </location>
    <ligand>
        <name>Mg(2+)</name>
        <dbReference type="ChEBI" id="CHEBI:18420"/>
    </ligand>
</feature>